<proteinExistence type="inferred from homology"/>
<reference key="1">
    <citation type="journal article" date="2009" name="Nat. Biotechnol.">
        <title>Genome sequence of the recombinant protein production host Pichia pastoris.</title>
        <authorList>
            <person name="De Schutter K."/>
            <person name="Lin Y.-C."/>
            <person name="Tiels P."/>
            <person name="Van Hecke A."/>
            <person name="Glinka S."/>
            <person name="Weber-Lehmann J."/>
            <person name="Rouze P."/>
            <person name="Van de Peer Y."/>
            <person name="Callewaert N."/>
        </authorList>
    </citation>
    <scope>NUCLEOTIDE SEQUENCE [LARGE SCALE GENOMIC DNA]</scope>
    <source>
        <strain>GS115 / ATCC 20864</strain>
    </source>
</reference>
<protein>
    <recommendedName>
        <fullName evidence="1">ATPase GET3</fullName>
        <ecNumber evidence="1">3.6.-.-</ecNumber>
    </recommendedName>
    <alternativeName>
        <fullName evidence="1">Arsenical pump-driving ATPase</fullName>
    </alternativeName>
    <alternativeName>
        <fullName evidence="1">Arsenite-stimulated ATPase</fullName>
    </alternativeName>
    <alternativeName>
        <fullName evidence="1">Golgi to ER traffic protein 3</fullName>
    </alternativeName>
    <alternativeName>
        <fullName evidence="1">Guided entry of tail-anchored proteins 3</fullName>
    </alternativeName>
</protein>
<organism>
    <name type="scientific">Komagataella phaffii (strain GS115 / ATCC 20864)</name>
    <name type="common">Yeast</name>
    <name type="synonym">Pichia pastoris</name>
    <dbReference type="NCBI Taxonomy" id="644223"/>
    <lineage>
        <taxon>Eukaryota</taxon>
        <taxon>Fungi</taxon>
        <taxon>Dikarya</taxon>
        <taxon>Ascomycota</taxon>
        <taxon>Saccharomycotina</taxon>
        <taxon>Pichiomycetes</taxon>
        <taxon>Pichiales</taxon>
        <taxon>Pichiaceae</taxon>
        <taxon>Komagataella</taxon>
    </lineage>
</organism>
<name>GET3_KOMPG</name>
<keyword id="KW-0067">ATP-binding</keyword>
<keyword id="KW-0963">Cytoplasm</keyword>
<keyword id="KW-0256">Endoplasmic reticulum</keyword>
<keyword id="KW-0333">Golgi apparatus</keyword>
<keyword id="KW-0378">Hydrolase</keyword>
<keyword id="KW-0479">Metal-binding</keyword>
<keyword id="KW-0547">Nucleotide-binding</keyword>
<keyword id="KW-1185">Reference proteome</keyword>
<keyword id="KW-0813">Transport</keyword>
<keyword id="KW-0862">Zinc</keyword>
<comment type="function">
    <text evidence="1">ATPase required for the post-translational delivery of tail-anchored (TA) proteins to the endoplasmic reticulum. Recognizes and selectively binds the transmembrane domain of TA proteins in the cytosol. This complex then targets to the endoplasmic reticulum by membrane-bound receptors GET1 and GET2, where the tail-anchored protein is released for insertion. This process is regulated by ATP binding and hydrolysis. ATP binding drives the homodimer towards the closed dimer state, facilitating recognition of newly synthesized TA membrane proteins. ATP hydrolysis is required for insertion. Subsequently, the homodimer reverts towards the open dimer state, lowering its affinity for the GET1-GET2 receptor, and returning it to the cytosol to initiate a new round of targeting. Cooperates with the HDEL receptor ERD2 to mediate the ATP-dependent retrieval of resident ER proteins that contain a C-terminal H-D-E-L retention signal from the Golgi to the ER. Involved in low-level resistance to the oxyanions arsenite and arsenate, and in heat tolerance.</text>
</comment>
<comment type="subunit">
    <text evidence="1">Homodimer. Component of the Golgi to ER traffic (GET) complex, which is composed of GET1, GET2 and GET3. Within the complex, GET1 and GET2 form a heterotetramer which is stabilized by phosphatidylinositol binding and which binds to the GET3 homodimer. Interacts with the chloride channel protein GEF1.</text>
</comment>
<comment type="subcellular location">
    <subcellularLocation>
        <location evidence="1">Cytoplasm</location>
    </subcellularLocation>
    <subcellularLocation>
        <location evidence="1">Endoplasmic reticulum</location>
    </subcellularLocation>
    <subcellularLocation>
        <location evidence="1">Golgi apparatus</location>
    </subcellularLocation>
    <text evidence="1">GET1 and GET2 are required for targeting GET3 to the endoplasmic reticulum.</text>
</comment>
<comment type="similarity">
    <text evidence="1">Belongs to the arsA ATPase family.</text>
</comment>
<gene>
    <name evidence="1" type="primary">GET3</name>
    <name type="ordered locus">PAS_chr4_0405</name>
</gene>
<feature type="chain" id="PRO_0000388224" description="ATPase GET3">
    <location>
        <begin position="1"/>
        <end position="344"/>
    </location>
</feature>
<feature type="active site" evidence="1">
    <location>
        <position position="57"/>
    </location>
</feature>
<feature type="binding site" evidence="1">
    <location>
        <begin position="26"/>
        <end position="33"/>
    </location>
    <ligand>
        <name>ATP</name>
        <dbReference type="ChEBI" id="CHEBI:30616"/>
    </ligand>
</feature>
<feature type="binding site" evidence="1">
    <location>
        <position position="239"/>
    </location>
    <ligand>
        <name>ATP</name>
        <dbReference type="ChEBI" id="CHEBI:30616"/>
    </ligand>
</feature>
<feature type="binding site" evidence="1">
    <location>
        <position position="266"/>
    </location>
    <ligand>
        <name>ATP</name>
        <dbReference type="ChEBI" id="CHEBI:30616"/>
    </ligand>
</feature>
<feature type="binding site" evidence="1">
    <location>
        <position position="276"/>
    </location>
    <ligand>
        <name>Zn(2+)</name>
        <dbReference type="ChEBI" id="CHEBI:29105"/>
        <note>ligand shared between dimeric partners</note>
    </ligand>
</feature>
<feature type="binding site" evidence="1">
    <location>
        <position position="279"/>
    </location>
    <ligand>
        <name>Zn(2+)</name>
        <dbReference type="ChEBI" id="CHEBI:29105"/>
        <note>ligand shared between dimeric partners</note>
    </ligand>
</feature>
<sequence length="344" mass="38785">MDIEAEPSLRSIVNHESLKWIFVGGKGGVGKTTTSSSISIQLALHNPNKKYLLISTDPAHNLSDAFNQKFGKDARQVEGLPNLSCMEIDPDSTLENLQKNNESTFGSAGGNDPLKSMMGDITGSIPGIDEAFSFMEVLKHIGETKENQIKYDTVIFDTAPTGHTLRFLQLPSTLEKLLGKVNELSGRFGPMLNNLLGSQGGQSIDFASKIKEIQVQVTEVNKQFQDPELTTFVCVCISEFLSLYETERLIQELMSYNMDVNSIVINQLLFSDDSECRRCNARWRMQKKYLDQMDELYEDYHLVKMPLLAMEVRGLENLKKFSKYLIEPYNSETDGHVVFDLEEQ</sequence>
<dbReference type="EC" id="3.6.-.-" evidence="1"/>
<dbReference type="EMBL" id="FN392322">
    <property type="protein sequence ID" value="CAY71654.1"/>
    <property type="molecule type" value="Genomic_DNA"/>
</dbReference>
<dbReference type="RefSeq" id="XP_002493833.1">
    <property type="nucleotide sequence ID" value="XM_002493788.1"/>
</dbReference>
<dbReference type="SMR" id="C4R7S9"/>
<dbReference type="FunCoup" id="C4R7S9">
    <property type="interactions" value="998"/>
</dbReference>
<dbReference type="STRING" id="644223.C4R7S9"/>
<dbReference type="EnsemblFungi" id="CAY71654">
    <property type="protein sequence ID" value="CAY71654"/>
    <property type="gene ID" value="PAS_chr4_0405"/>
</dbReference>
<dbReference type="GeneID" id="8200688"/>
<dbReference type="KEGG" id="ppa:PAS_chr4_0405"/>
<dbReference type="eggNOG" id="KOG2825">
    <property type="taxonomic scope" value="Eukaryota"/>
</dbReference>
<dbReference type="HOGENOM" id="CLU_040761_0_0_1"/>
<dbReference type="InParanoid" id="C4R7S9"/>
<dbReference type="OMA" id="MDAPYEF"/>
<dbReference type="OrthoDB" id="1770at2759"/>
<dbReference type="Proteomes" id="UP000000314">
    <property type="component" value="Chromosome 4"/>
</dbReference>
<dbReference type="GO" id="GO:0043529">
    <property type="term" value="C:GET complex"/>
    <property type="evidence" value="ECO:0007669"/>
    <property type="project" value="TreeGrafter"/>
</dbReference>
<dbReference type="GO" id="GO:0005794">
    <property type="term" value="C:Golgi apparatus"/>
    <property type="evidence" value="ECO:0007669"/>
    <property type="project" value="UniProtKB-SubCell"/>
</dbReference>
<dbReference type="GO" id="GO:0005524">
    <property type="term" value="F:ATP binding"/>
    <property type="evidence" value="ECO:0007669"/>
    <property type="project" value="UniProtKB-UniRule"/>
</dbReference>
<dbReference type="GO" id="GO:0016887">
    <property type="term" value="F:ATP hydrolysis activity"/>
    <property type="evidence" value="ECO:0007669"/>
    <property type="project" value="InterPro"/>
</dbReference>
<dbReference type="GO" id="GO:0046872">
    <property type="term" value="F:metal ion binding"/>
    <property type="evidence" value="ECO:0007669"/>
    <property type="project" value="UniProtKB-KW"/>
</dbReference>
<dbReference type="GO" id="GO:0071816">
    <property type="term" value="P:tail-anchored membrane protein insertion into ER membrane"/>
    <property type="evidence" value="ECO:0007669"/>
    <property type="project" value="TreeGrafter"/>
</dbReference>
<dbReference type="CDD" id="cd02035">
    <property type="entry name" value="ArsA"/>
    <property type="match status" value="1"/>
</dbReference>
<dbReference type="FunFam" id="3.40.50.300:FF:001359">
    <property type="entry name" value="ATPase GET3"/>
    <property type="match status" value="1"/>
</dbReference>
<dbReference type="Gene3D" id="3.40.50.300">
    <property type="entry name" value="P-loop containing nucleotide triphosphate hydrolases"/>
    <property type="match status" value="1"/>
</dbReference>
<dbReference type="HAMAP" id="MF_03112">
    <property type="entry name" value="Asna1_Get3"/>
    <property type="match status" value="1"/>
</dbReference>
<dbReference type="InterPro" id="IPR025723">
    <property type="entry name" value="Anion-transp_ATPase-like_dom"/>
</dbReference>
<dbReference type="InterPro" id="IPR016300">
    <property type="entry name" value="ATPase_ArsA/GET3"/>
</dbReference>
<dbReference type="InterPro" id="IPR027542">
    <property type="entry name" value="ATPase_ArsA/GET3_euk"/>
</dbReference>
<dbReference type="InterPro" id="IPR027417">
    <property type="entry name" value="P-loop_NTPase"/>
</dbReference>
<dbReference type="NCBIfam" id="TIGR00345">
    <property type="entry name" value="GET3_arsA_TRC40"/>
    <property type="match status" value="1"/>
</dbReference>
<dbReference type="PANTHER" id="PTHR10803">
    <property type="entry name" value="ARSENICAL PUMP-DRIVING ATPASE ARSENITE-TRANSLOCATING ATPASE"/>
    <property type="match status" value="1"/>
</dbReference>
<dbReference type="PANTHER" id="PTHR10803:SF3">
    <property type="entry name" value="ATPASE GET3"/>
    <property type="match status" value="1"/>
</dbReference>
<dbReference type="Pfam" id="PF02374">
    <property type="entry name" value="ArsA_ATPase"/>
    <property type="match status" value="1"/>
</dbReference>
<dbReference type="SUPFAM" id="SSF52540">
    <property type="entry name" value="P-loop containing nucleoside triphosphate hydrolases"/>
    <property type="match status" value="1"/>
</dbReference>
<evidence type="ECO:0000255" key="1">
    <source>
        <dbReference type="HAMAP-Rule" id="MF_03112"/>
    </source>
</evidence>
<accession>C4R7S9</accession>